<gene>
    <name type="primary">utp25</name>
    <name type="ORF">PMAA_025460</name>
</gene>
<organism>
    <name type="scientific">Talaromyces marneffei (strain ATCC 18224 / CBS 334.59 / QM 7333)</name>
    <name type="common">Penicillium marneffei</name>
    <dbReference type="NCBI Taxonomy" id="441960"/>
    <lineage>
        <taxon>Eukaryota</taxon>
        <taxon>Fungi</taxon>
        <taxon>Dikarya</taxon>
        <taxon>Ascomycota</taxon>
        <taxon>Pezizomycotina</taxon>
        <taxon>Eurotiomycetes</taxon>
        <taxon>Eurotiomycetidae</taxon>
        <taxon>Eurotiales</taxon>
        <taxon>Trichocomaceae</taxon>
        <taxon>Talaromyces</taxon>
        <taxon>Talaromyces sect. Talaromyces</taxon>
    </lineage>
</organism>
<proteinExistence type="inferred from homology"/>
<sequence>MPPPRKRGRGSFRGSSRGAHRGRGHARGGRNSFQTSRVDEKREIESSDDEEQFNGFEDEVSGGEEPMQDVEIASEPSSEDEEPATERSYNSLLQLLNAKSEPSHARKRRKLDHLESKQDKPNREVEIQETTKEPEEQDVLENQEASEEEDNVEVDRAGESDDEDEEDASDPFETHISSPDETEISKRVKEITAGKWRSIKSSLLETFRLIYNIPDEEGGSWSIPSAVKNTRSLKLKKRLIPTAAERIPSFSGISQNIASLVFNYSDVLFGDRKASNAAQLRDLLSLHALNHVLKTRDRVIKNNARLSRDINPDIELRDQGFTRPKVLIILPTRQACVRFIDSISRLYQPEQQENRKRFMDEYNAKDNESWESKPDDFRDLFGGNDDDMFRIGLKFTRKTIKYYSQFYNSDIILASPLGLRTIMDKEDEKKRDHDFLSSIEIAIVDHADGLLMQNWEHVEYIFEHLNLQPKEAHGCDFSRVRTWYLDDRARYIRQTIVTTSFLTPEMNSLFSQHMQNVAGKAKILPQYNGAITEVALPITVKQTFSRFDSTFALKEPDLRFKYFTTAILPALARSVTGKGEGNGAGTLIFIPSYLDFVRVRNFFSTSSRATNISFGAISEYTEQSEMSRSRSHFMSGRLSVLLYTERAHHFRRYNIRGVKHVIFYGLPENPIFFREVVQYLGLDPGALAGSAGAETLDVRAVFSKYDAFKLERIVGTQRAANMLKEKGGDTFRFV</sequence>
<feature type="chain" id="PRO_0000408130" description="U3 small nucleolar RNA-associated protein 25">
    <location>
        <begin position="1"/>
        <end position="734"/>
    </location>
</feature>
<feature type="region of interest" description="Disordered" evidence="2">
    <location>
        <begin position="1"/>
        <end position="186"/>
    </location>
</feature>
<feature type="compositionally biased region" description="Basic residues" evidence="2">
    <location>
        <begin position="1"/>
        <end position="10"/>
    </location>
</feature>
<feature type="compositionally biased region" description="Basic residues" evidence="2">
    <location>
        <begin position="18"/>
        <end position="28"/>
    </location>
</feature>
<feature type="compositionally biased region" description="Acidic residues" evidence="2">
    <location>
        <begin position="46"/>
        <end position="68"/>
    </location>
</feature>
<feature type="compositionally biased region" description="Basic and acidic residues" evidence="2">
    <location>
        <begin position="112"/>
        <end position="134"/>
    </location>
</feature>
<feature type="compositionally biased region" description="Acidic residues" evidence="2">
    <location>
        <begin position="135"/>
        <end position="152"/>
    </location>
</feature>
<feature type="compositionally biased region" description="Acidic residues" evidence="2">
    <location>
        <begin position="160"/>
        <end position="170"/>
    </location>
</feature>
<keyword id="KW-0539">Nucleus</keyword>
<keyword id="KW-1185">Reference proteome</keyword>
<keyword id="KW-0687">Ribonucleoprotein</keyword>
<keyword id="KW-0690">Ribosome biogenesis</keyword>
<keyword id="KW-0698">rRNA processing</keyword>
<name>UTP25_TALMQ</name>
<protein>
    <recommendedName>
        <fullName>U3 small nucleolar RNA-associated protein 25</fullName>
        <shortName>U3 snoRNA-associated protein 25</shortName>
    </recommendedName>
    <alternativeName>
        <fullName>U three protein 25</fullName>
    </alternativeName>
</protein>
<accession>B6Q702</accession>
<evidence type="ECO:0000250" key="1"/>
<evidence type="ECO:0000256" key="2">
    <source>
        <dbReference type="SAM" id="MobiDB-lite"/>
    </source>
</evidence>
<evidence type="ECO:0000305" key="3"/>
<dbReference type="EMBL" id="DS995899">
    <property type="protein sequence ID" value="EEA27692.1"/>
    <property type="molecule type" value="Genomic_DNA"/>
</dbReference>
<dbReference type="RefSeq" id="XP_002144207.1">
    <property type="nucleotide sequence ID" value="XM_002144171.1"/>
</dbReference>
<dbReference type="STRING" id="441960.B6Q702"/>
<dbReference type="VEuPathDB" id="FungiDB:PMAA_025460"/>
<dbReference type="HOGENOM" id="CLU_018705_0_1_1"/>
<dbReference type="OrthoDB" id="8879at28568"/>
<dbReference type="PhylomeDB" id="B6Q702"/>
<dbReference type="Proteomes" id="UP000001294">
    <property type="component" value="Unassembled WGS sequence"/>
</dbReference>
<dbReference type="GO" id="GO:0005730">
    <property type="term" value="C:nucleolus"/>
    <property type="evidence" value="ECO:0007669"/>
    <property type="project" value="UniProtKB-SubCell"/>
</dbReference>
<dbReference type="GO" id="GO:0032040">
    <property type="term" value="C:small-subunit processome"/>
    <property type="evidence" value="ECO:0007669"/>
    <property type="project" value="TreeGrafter"/>
</dbReference>
<dbReference type="GO" id="GO:0019843">
    <property type="term" value="F:rRNA binding"/>
    <property type="evidence" value="ECO:0007669"/>
    <property type="project" value="TreeGrafter"/>
</dbReference>
<dbReference type="GO" id="GO:0034511">
    <property type="term" value="F:U3 snoRNA binding"/>
    <property type="evidence" value="ECO:0007669"/>
    <property type="project" value="InterPro"/>
</dbReference>
<dbReference type="GO" id="GO:0000462">
    <property type="term" value="P:maturation of SSU-rRNA from tricistronic rRNA transcript (SSU-rRNA, 5.8S rRNA, LSU-rRNA)"/>
    <property type="evidence" value="ECO:0007669"/>
    <property type="project" value="TreeGrafter"/>
</dbReference>
<dbReference type="FunFam" id="3.40.50.300:FF:002356">
    <property type="entry name" value="U3 small nucleolar RNA-associated protein 25"/>
    <property type="match status" value="1"/>
</dbReference>
<dbReference type="Gene3D" id="3.40.50.300">
    <property type="entry name" value="P-loop containing nucleotide triphosphate hydrolases"/>
    <property type="match status" value="1"/>
</dbReference>
<dbReference type="InterPro" id="IPR027417">
    <property type="entry name" value="P-loop_NTPase"/>
</dbReference>
<dbReference type="InterPro" id="IPR010678">
    <property type="entry name" value="UTP25"/>
</dbReference>
<dbReference type="InterPro" id="IPR053939">
    <property type="entry name" value="UTP25_C"/>
</dbReference>
<dbReference type="InterPro" id="IPR053940">
    <property type="entry name" value="UTP25_NTPase-like"/>
</dbReference>
<dbReference type="PANTHER" id="PTHR12933">
    <property type="entry name" value="ORF PROTEIN-RELATED"/>
    <property type="match status" value="1"/>
</dbReference>
<dbReference type="PANTHER" id="PTHR12933:SF0">
    <property type="entry name" value="U3 SMALL NUCLEOLAR RNA-ASSOCIATED PROTEIN 25 HOMOLOG"/>
    <property type="match status" value="1"/>
</dbReference>
<dbReference type="Pfam" id="PF06862">
    <property type="entry name" value="Utp25_C"/>
    <property type="match status" value="1"/>
</dbReference>
<dbReference type="Pfam" id="PF22916">
    <property type="entry name" value="UTP25_NTPase-like"/>
    <property type="match status" value="1"/>
</dbReference>
<dbReference type="SUPFAM" id="SSF52540">
    <property type="entry name" value="P-loop containing nucleoside triphosphate hydrolases"/>
    <property type="match status" value="1"/>
</dbReference>
<comment type="function">
    <text evidence="1">DEAD-box RNA helicase-like protein required for pre-18S rRNA processing, specifically at sites A0, A1, and A2.</text>
</comment>
<comment type="subunit">
    <text evidence="1">Component of the ribosomal small subunit (SSU) processome composed of at least 40 protein subunits and snoRNA U3.</text>
</comment>
<comment type="subcellular location">
    <subcellularLocation>
        <location evidence="1">Nucleus</location>
        <location evidence="1">Nucleolus</location>
    </subcellularLocation>
</comment>
<comment type="similarity">
    <text evidence="3">Belongs to the UTP25 family.</text>
</comment>
<reference key="1">
    <citation type="journal article" date="2015" name="Genome Announc.">
        <title>Genome sequence of the AIDS-associated pathogen Penicillium marneffei (ATCC18224) and its near taxonomic relative Talaromyces stipitatus (ATCC10500).</title>
        <authorList>
            <person name="Nierman W.C."/>
            <person name="Fedorova-Abrams N.D."/>
            <person name="Andrianopoulos A."/>
        </authorList>
    </citation>
    <scope>NUCLEOTIDE SEQUENCE [LARGE SCALE GENOMIC DNA]</scope>
    <source>
        <strain>ATCC 18224 / CBS 334.59 / QM 7333</strain>
    </source>
</reference>